<protein>
    <recommendedName>
        <fullName evidence="1">Putative manganese efflux pump MntP</fullName>
    </recommendedName>
</protein>
<reference key="1">
    <citation type="journal article" date="2016" name="Stand. Genomic Sci.">
        <title>Complete genome sequence of Methanospirillum hungatei type strain JF1.</title>
        <authorList>
            <person name="Gunsalus R.P."/>
            <person name="Cook L.E."/>
            <person name="Crable B."/>
            <person name="Rohlin L."/>
            <person name="McDonald E."/>
            <person name="Mouttaki H."/>
            <person name="Sieber J.R."/>
            <person name="Poweleit N."/>
            <person name="Zhou H."/>
            <person name="Lapidus A.L."/>
            <person name="Daligault H.E."/>
            <person name="Land M."/>
            <person name="Gilna P."/>
            <person name="Ivanova N."/>
            <person name="Kyrpides N."/>
            <person name="Culley D.E."/>
            <person name="McInerney M.J."/>
        </authorList>
    </citation>
    <scope>NUCLEOTIDE SEQUENCE [LARGE SCALE GENOMIC DNA]</scope>
    <source>
        <strain>ATCC 27890 / DSM 864 / NBRC 100397 / JF-1</strain>
    </source>
</reference>
<dbReference type="EMBL" id="CP000254">
    <property type="protein sequence ID" value="ABD39944.1"/>
    <property type="molecule type" value="Genomic_DNA"/>
</dbReference>
<dbReference type="RefSeq" id="WP_011447240.1">
    <property type="nucleotide sequence ID" value="NC_007796.1"/>
</dbReference>
<dbReference type="STRING" id="323259.Mhun_0168"/>
<dbReference type="EnsemblBacteria" id="ABD39944">
    <property type="protein sequence ID" value="ABD39944"/>
    <property type="gene ID" value="Mhun_0168"/>
</dbReference>
<dbReference type="GeneID" id="3922611"/>
<dbReference type="KEGG" id="mhu:Mhun_0168"/>
<dbReference type="eggNOG" id="arCOG04898">
    <property type="taxonomic scope" value="Archaea"/>
</dbReference>
<dbReference type="HOGENOM" id="CLU_096410_3_0_2"/>
<dbReference type="InParanoid" id="Q2FPH2"/>
<dbReference type="OrthoDB" id="53356at2157"/>
<dbReference type="Proteomes" id="UP000001941">
    <property type="component" value="Chromosome"/>
</dbReference>
<dbReference type="GO" id="GO:0005886">
    <property type="term" value="C:plasma membrane"/>
    <property type="evidence" value="ECO:0007669"/>
    <property type="project" value="UniProtKB-SubCell"/>
</dbReference>
<dbReference type="GO" id="GO:0005384">
    <property type="term" value="F:manganese ion transmembrane transporter activity"/>
    <property type="evidence" value="ECO:0007669"/>
    <property type="project" value="UniProtKB-UniRule"/>
</dbReference>
<dbReference type="HAMAP" id="MF_01521">
    <property type="entry name" value="MntP_pump"/>
    <property type="match status" value="1"/>
</dbReference>
<dbReference type="InterPro" id="IPR003810">
    <property type="entry name" value="Mntp/YtaF"/>
</dbReference>
<dbReference type="InterPro" id="IPR022929">
    <property type="entry name" value="Put_MntP"/>
</dbReference>
<dbReference type="PANTHER" id="PTHR35529">
    <property type="entry name" value="MANGANESE EFFLUX PUMP MNTP-RELATED"/>
    <property type="match status" value="1"/>
</dbReference>
<dbReference type="PANTHER" id="PTHR35529:SF1">
    <property type="entry name" value="MANGANESE EFFLUX PUMP MNTP-RELATED"/>
    <property type="match status" value="1"/>
</dbReference>
<dbReference type="Pfam" id="PF02659">
    <property type="entry name" value="Mntp"/>
    <property type="match status" value="1"/>
</dbReference>
<evidence type="ECO:0000255" key="1">
    <source>
        <dbReference type="HAMAP-Rule" id="MF_01521"/>
    </source>
</evidence>
<accession>Q2FPH2</accession>
<sequence length="192" mass="19940">MDLIFTSVLIGIGLAMDCLAVSFAVGAHQKTSRIRAAFILALFFGGFQGGMTLLGWLLGSGFADAIAAYDHWVAAGLLFIIGGKMVLDGIKDGHEEEAPDVFNFVAVFILAVATSIDALAVGLSFSLLHIVPLIPALIIGLISAIFSVGGVYSGGKIGHILGKRVDILGGVILTLIGIRILLEHLVWNGAGA</sequence>
<keyword id="KW-1003">Cell membrane</keyword>
<keyword id="KW-0406">Ion transport</keyword>
<keyword id="KW-0464">Manganese</keyword>
<keyword id="KW-0472">Membrane</keyword>
<keyword id="KW-1185">Reference proteome</keyword>
<keyword id="KW-0812">Transmembrane</keyword>
<keyword id="KW-1133">Transmembrane helix</keyword>
<keyword id="KW-0813">Transport</keyword>
<feature type="chain" id="PRO_0000292550" description="Putative manganese efflux pump MntP">
    <location>
        <begin position="1"/>
        <end position="192"/>
    </location>
</feature>
<feature type="transmembrane region" description="Helical" evidence="1">
    <location>
        <begin position="3"/>
        <end position="23"/>
    </location>
</feature>
<feature type="transmembrane region" description="Helical" evidence="1">
    <location>
        <begin position="38"/>
        <end position="58"/>
    </location>
</feature>
<feature type="transmembrane region" description="Helical" evidence="1">
    <location>
        <begin position="61"/>
        <end position="81"/>
    </location>
</feature>
<feature type="transmembrane region" description="Helical" evidence="1">
    <location>
        <begin position="101"/>
        <end position="121"/>
    </location>
</feature>
<feature type="transmembrane region" description="Helical" evidence="1">
    <location>
        <begin position="130"/>
        <end position="150"/>
    </location>
</feature>
<feature type="transmembrane region" description="Helical" evidence="1">
    <location>
        <begin position="167"/>
        <end position="187"/>
    </location>
</feature>
<comment type="function">
    <text evidence="1">Probably functions as a manganese efflux pump.</text>
</comment>
<comment type="subcellular location">
    <subcellularLocation>
        <location evidence="1">Cell membrane</location>
        <topology evidence="1">Multi-pass membrane protein</topology>
    </subcellularLocation>
</comment>
<comment type="similarity">
    <text evidence="1">Belongs to the MntP (TC 9.B.29) family.</text>
</comment>
<gene>
    <name evidence="1" type="primary">mntP</name>
    <name type="ordered locus">Mhun_0168</name>
</gene>
<organism>
    <name type="scientific">Methanospirillum hungatei JF-1 (strain ATCC 27890 / DSM 864 / NBRC 100397 / JF-1)</name>
    <dbReference type="NCBI Taxonomy" id="323259"/>
    <lineage>
        <taxon>Archaea</taxon>
        <taxon>Methanobacteriati</taxon>
        <taxon>Methanobacteriota</taxon>
        <taxon>Stenosarchaea group</taxon>
        <taxon>Methanomicrobia</taxon>
        <taxon>Methanomicrobiales</taxon>
        <taxon>Methanospirillaceae</taxon>
        <taxon>Methanospirillum</taxon>
    </lineage>
</organism>
<proteinExistence type="inferred from homology"/>
<name>MNTP_METHJ</name>